<feature type="chain" id="PRO_1000060309" description="Phosphoenolpyruvate carboxykinase (ATP)">
    <location>
        <begin position="1"/>
        <end position="536"/>
    </location>
</feature>
<feature type="binding site" evidence="1">
    <location>
        <position position="61"/>
    </location>
    <ligand>
        <name>substrate</name>
    </ligand>
</feature>
<feature type="binding site" evidence="1">
    <location>
        <position position="195"/>
    </location>
    <ligand>
        <name>substrate</name>
    </ligand>
</feature>
<feature type="binding site" evidence="1">
    <location>
        <position position="201"/>
    </location>
    <ligand>
        <name>ATP</name>
        <dbReference type="ChEBI" id="CHEBI:30616"/>
    </ligand>
</feature>
<feature type="binding site" evidence="1">
    <location>
        <position position="201"/>
    </location>
    <ligand>
        <name>Mn(2+)</name>
        <dbReference type="ChEBI" id="CHEBI:29035"/>
    </ligand>
</feature>
<feature type="binding site" evidence="1">
    <location>
        <position position="201"/>
    </location>
    <ligand>
        <name>substrate</name>
    </ligand>
</feature>
<feature type="binding site" evidence="1">
    <location>
        <position position="220"/>
    </location>
    <ligand>
        <name>ATP</name>
        <dbReference type="ChEBI" id="CHEBI:30616"/>
    </ligand>
</feature>
<feature type="binding site" evidence="1">
    <location>
        <position position="220"/>
    </location>
    <ligand>
        <name>Mn(2+)</name>
        <dbReference type="ChEBI" id="CHEBI:29035"/>
    </ligand>
</feature>
<feature type="binding site" evidence="1">
    <location>
        <begin position="236"/>
        <end position="244"/>
    </location>
    <ligand>
        <name>ATP</name>
        <dbReference type="ChEBI" id="CHEBI:30616"/>
    </ligand>
</feature>
<feature type="binding site" evidence="1">
    <location>
        <position position="257"/>
    </location>
    <ligand>
        <name>Mn(2+)</name>
        <dbReference type="ChEBI" id="CHEBI:29035"/>
    </ligand>
</feature>
<feature type="binding site" evidence="1">
    <location>
        <position position="285"/>
    </location>
    <ligand>
        <name>ATP</name>
        <dbReference type="ChEBI" id="CHEBI:30616"/>
    </ligand>
</feature>
<feature type="binding site" evidence="1">
    <location>
        <position position="322"/>
    </location>
    <ligand>
        <name>ATP</name>
        <dbReference type="ChEBI" id="CHEBI:30616"/>
    </ligand>
</feature>
<feature type="binding site" evidence="1">
    <location>
        <position position="322"/>
    </location>
    <ligand>
        <name>substrate</name>
    </ligand>
</feature>
<feature type="binding site" evidence="1">
    <location>
        <position position="447"/>
    </location>
    <ligand>
        <name>ATP</name>
        <dbReference type="ChEBI" id="CHEBI:30616"/>
    </ligand>
</feature>
<sequence>MEELGSRNPSIGLESIGFSDLSVVRYNFEAAQLYEEALAHGEAELTAHGALCARTGQHTGRSPKDKYVVRDANTADQIWWDNNSAISPENFDRLRQDMLAHAKGMSLYVQDLVGGADPENALPTRVVTEFAWHSLFIRNLLIRPEREALSSFQPMLTIIDLPSFKASPERHGCRSETVIACDLTNGLVLIGGTSYAGEMKKSVFTVLNYLLPRKSVMPMHCSANVGPAGDTAIFFGLSGTGKTTLSADPNRTLIGDDEHGWGEKGVFNFEGGCYAKAIRLSEAAEPEIFATTQRFGTVMENVVLDERRMPDFEDGSLTENTRCAYPLHFIPNASKTGTAPQPRTIIMLTADAFGVLPPIAKLTPEQAMYHFLSGYTAKVAGTEKGVTEPEATFSTCFGAPFMPRHPSEYGNLLKELIARNGVTCWLVNTGWTGGAYGTGSRMPIKVTRALLSAALDGSLNSASFRSDANFGFAVPVSVPGVESRILDPRSTWADGAAYDAQARRLVDMFIANFAKFESHVDGSVRDAAPGARIAAE</sequence>
<gene>
    <name evidence="1" type="primary">pckA</name>
    <name type="ordered locus">Smed_3253</name>
</gene>
<dbReference type="EC" id="4.1.1.49" evidence="1"/>
<dbReference type="EMBL" id="CP000738">
    <property type="protein sequence ID" value="ABR62077.1"/>
    <property type="molecule type" value="Genomic_DNA"/>
</dbReference>
<dbReference type="RefSeq" id="WP_012067458.1">
    <property type="nucleotide sequence ID" value="NC_009636.1"/>
</dbReference>
<dbReference type="RefSeq" id="YP_001328912.1">
    <property type="nucleotide sequence ID" value="NC_009636.1"/>
</dbReference>
<dbReference type="SMR" id="A6UEJ7"/>
<dbReference type="STRING" id="366394.Smed_3253"/>
<dbReference type="KEGG" id="smd:Smed_3253"/>
<dbReference type="PATRIC" id="fig|366394.8.peg.6493"/>
<dbReference type="eggNOG" id="COG1866">
    <property type="taxonomic scope" value="Bacteria"/>
</dbReference>
<dbReference type="HOGENOM" id="CLU_018247_0_1_5"/>
<dbReference type="OrthoDB" id="9806325at2"/>
<dbReference type="UniPathway" id="UPA00138"/>
<dbReference type="Proteomes" id="UP000001108">
    <property type="component" value="Chromosome"/>
</dbReference>
<dbReference type="GO" id="GO:0005829">
    <property type="term" value="C:cytosol"/>
    <property type="evidence" value="ECO:0007669"/>
    <property type="project" value="TreeGrafter"/>
</dbReference>
<dbReference type="GO" id="GO:0005524">
    <property type="term" value="F:ATP binding"/>
    <property type="evidence" value="ECO:0007669"/>
    <property type="project" value="UniProtKB-UniRule"/>
</dbReference>
<dbReference type="GO" id="GO:0046872">
    <property type="term" value="F:metal ion binding"/>
    <property type="evidence" value="ECO:0007669"/>
    <property type="project" value="UniProtKB-KW"/>
</dbReference>
<dbReference type="GO" id="GO:0004612">
    <property type="term" value="F:phosphoenolpyruvate carboxykinase (ATP) activity"/>
    <property type="evidence" value="ECO:0007669"/>
    <property type="project" value="UniProtKB-UniRule"/>
</dbReference>
<dbReference type="GO" id="GO:0006094">
    <property type="term" value="P:gluconeogenesis"/>
    <property type="evidence" value="ECO:0007669"/>
    <property type="project" value="UniProtKB-UniRule"/>
</dbReference>
<dbReference type="CDD" id="cd00484">
    <property type="entry name" value="PEPCK_ATP"/>
    <property type="match status" value="1"/>
</dbReference>
<dbReference type="Gene3D" id="3.90.228.20">
    <property type="match status" value="1"/>
</dbReference>
<dbReference type="Gene3D" id="3.40.449.10">
    <property type="entry name" value="Phosphoenolpyruvate Carboxykinase, domain 1"/>
    <property type="match status" value="1"/>
</dbReference>
<dbReference type="Gene3D" id="2.170.8.10">
    <property type="entry name" value="Phosphoenolpyruvate Carboxykinase, domain 2"/>
    <property type="match status" value="1"/>
</dbReference>
<dbReference type="HAMAP" id="MF_00453">
    <property type="entry name" value="PEPCK_ATP"/>
    <property type="match status" value="1"/>
</dbReference>
<dbReference type="InterPro" id="IPR001272">
    <property type="entry name" value="PEP_carboxykinase_ATP"/>
</dbReference>
<dbReference type="InterPro" id="IPR013035">
    <property type="entry name" value="PEP_carboxykinase_C"/>
</dbReference>
<dbReference type="InterPro" id="IPR008210">
    <property type="entry name" value="PEP_carboxykinase_N"/>
</dbReference>
<dbReference type="InterPro" id="IPR015994">
    <property type="entry name" value="PEPCK_ATP_CS"/>
</dbReference>
<dbReference type="NCBIfam" id="TIGR00224">
    <property type="entry name" value="pckA"/>
    <property type="match status" value="1"/>
</dbReference>
<dbReference type="NCBIfam" id="NF006820">
    <property type="entry name" value="PRK09344.1-2"/>
    <property type="match status" value="1"/>
</dbReference>
<dbReference type="NCBIfam" id="NF006821">
    <property type="entry name" value="PRK09344.1-3"/>
    <property type="match status" value="1"/>
</dbReference>
<dbReference type="NCBIfam" id="NF006822">
    <property type="entry name" value="PRK09344.1-4"/>
    <property type="match status" value="1"/>
</dbReference>
<dbReference type="PANTHER" id="PTHR30031:SF0">
    <property type="entry name" value="PHOSPHOENOLPYRUVATE CARBOXYKINASE (ATP)"/>
    <property type="match status" value="1"/>
</dbReference>
<dbReference type="PANTHER" id="PTHR30031">
    <property type="entry name" value="PHOSPHOENOLPYRUVATE CARBOXYKINASE ATP"/>
    <property type="match status" value="1"/>
</dbReference>
<dbReference type="Pfam" id="PF01293">
    <property type="entry name" value="PEPCK_ATP"/>
    <property type="match status" value="1"/>
</dbReference>
<dbReference type="PIRSF" id="PIRSF006294">
    <property type="entry name" value="PEP_crbxkin"/>
    <property type="match status" value="1"/>
</dbReference>
<dbReference type="SUPFAM" id="SSF68923">
    <property type="entry name" value="PEP carboxykinase N-terminal domain"/>
    <property type="match status" value="1"/>
</dbReference>
<dbReference type="SUPFAM" id="SSF53795">
    <property type="entry name" value="PEP carboxykinase-like"/>
    <property type="match status" value="1"/>
</dbReference>
<dbReference type="PROSITE" id="PS00532">
    <property type="entry name" value="PEPCK_ATP"/>
    <property type="match status" value="1"/>
</dbReference>
<organism>
    <name type="scientific">Sinorhizobium medicae (strain WSM419)</name>
    <name type="common">Ensifer medicae</name>
    <dbReference type="NCBI Taxonomy" id="366394"/>
    <lineage>
        <taxon>Bacteria</taxon>
        <taxon>Pseudomonadati</taxon>
        <taxon>Pseudomonadota</taxon>
        <taxon>Alphaproteobacteria</taxon>
        <taxon>Hyphomicrobiales</taxon>
        <taxon>Rhizobiaceae</taxon>
        <taxon>Sinorhizobium/Ensifer group</taxon>
        <taxon>Sinorhizobium</taxon>
    </lineage>
</organism>
<comment type="function">
    <text evidence="1">Involved in the gluconeogenesis. Catalyzes the conversion of oxaloacetate (OAA) to phosphoenolpyruvate (PEP) through direct phosphoryl transfer between the nucleoside triphosphate and OAA.</text>
</comment>
<comment type="catalytic activity">
    <reaction evidence="1">
        <text>oxaloacetate + ATP = phosphoenolpyruvate + ADP + CO2</text>
        <dbReference type="Rhea" id="RHEA:18617"/>
        <dbReference type="ChEBI" id="CHEBI:16452"/>
        <dbReference type="ChEBI" id="CHEBI:16526"/>
        <dbReference type="ChEBI" id="CHEBI:30616"/>
        <dbReference type="ChEBI" id="CHEBI:58702"/>
        <dbReference type="ChEBI" id="CHEBI:456216"/>
        <dbReference type="EC" id="4.1.1.49"/>
    </reaction>
</comment>
<comment type="cofactor">
    <cofactor evidence="1">
        <name>Mn(2+)</name>
        <dbReference type="ChEBI" id="CHEBI:29035"/>
    </cofactor>
    <text evidence="1">Binds 1 Mn(2+) ion per subunit.</text>
</comment>
<comment type="pathway">
    <text evidence="1">Carbohydrate biosynthesis; gluconeogenesis.</text>
</comment>
<comment type="subcellular location">
    <subcellularLocation>
        <location evidence="1">Cytoplasm</location>
    </subcellularLocation>
</comment>
<comment type="similarity">
    <text evidence="1">Belongs to the phosphoenolpyruvate carboxykinase (ATP) family.</text>
</comment>
<name>PCKA_SINMW</name>
<protein>
    <recommendedName>
        <fullName evidence="1">Phosphoenolpyruvate carboxykinase (ATP)</fullName>
        <shortName evidence="1">PCK</shortName>
        <shortName evidence="1">PEP carboxykinase</shortName>
        <shortName evidence="1">PEPCK</shortName>
        <ecNumber evidence="1">4.1.1.49</ecNumber>
    </recommendedName>
</protein>
<accession>A6UEJ7</accession>
<proteinExistence type="inferred from homology"/>
<keyword id="KW-0067">ATP-binding</keyword>
<keyword id="KW-0963">Cytoplasm</keyword>
<keyword id="KW-0210">Decarboxylase</keyword>
<keyword id="KW-0312">Gluconeogenesis</keyword>
<keyword id="KW-0456">Lyase</keyword>
<keyword id="KW-0464">Manganese</keyword>
<keyword id="KW-0479">Metal-binding</keyword>
<keyword id="KW-0547">Nucleotide-binding</keyword>
<evidence type="ECO:0000255" key="1">
    <source>
        <dbReference type="HAMAP-Rule" id="MF_00453"/>
    </source>
</evidence>
<reference key="1">
    <citation type="submission" date="2007-06" db="EMBL/GenBank/DDBJ databases">
        <title>Complete sequence of Sinorhizobium medicae WSM419 chromosome.</title>
        <authorList>
            <consortium name="US DOE Joint Genome Institute"/>
            <person name="Copeland A."/>
            <person name="Lucas S."/>
            <person name="Lapidus A."/>
            <person name="Barry K."/>
            <person name="Glavina del Rio T."/>
            <person name="Dalin E."/>
            <person name="Tice H."/>
            <person name="Pitluck S."/>
            <person name="Chain P."/>
            <person name="Malfatti S."/>
            <person name="Shin M."/>
            <person name="Vergez L."/>
            <person name="Schmutz J."/>
            <person name="Larimer F."/>
            <person name="Land M."/>
            <person name="Hauser L."/>
            <person name="Kyrpides N."/>
            <person name="Mikhailova N."/>
            <person name="Reeve W.G."/>
            <person name="Richardson P."/>
        </authorList>
    </citation>
    <scope>NUCLEOTIDE SEQUENCE [LARGE SCALE GENOMIC DNA]</scope>
    <source>
        <strain>WSM419</strain>
    </source>
</reference>